<evidence type="ECO:0000255" key="1">
    <source>
        <dbReference type="HAMAP-Rule" id="MF_00500"/>
    </source>
</evidence>
<evidence type="ECO:0000305" key="2"/>
<comment type="function">
    <text evidence="1">Binds directly to 16S ribosomal RNA.</text>
</comment>
<comment type="similarity">
    <text evidence="1">Belongs to the bacterial ribosomal protein bS20 family.</text>
</comment>
<accession>Q5WTG3</accession>
<organism>
    <name type="scientific">Legionella pneumophila (strain Lens)</name>
    <dbReference type="NCBI Taxonomy" id="297245"/>
    <lineage>
        <taxon>Bacteria</taxon>
        <taxon>Pseudomonadati</taxon>
        <taxon>Pseudomonadota</taxon>
        <taxon>Gammaproteobacteria</taxon>
        <taxon>Legionellales</taxon>
        <taxon>Legionellaceae</taxon>
        <taxon>Legionella</taxon>
    </lineage>
</organism>
<dbReference type="EMBL" id="CR628337">
    <property type="protein sequence ID" value="CAH16801.1"/>
    <property type="molecule type" value="Genomic_DNA"/>
</dbReference>
<dbReference type="RefSeq" id="WP_010948336.1">
    <property type="nucleotide sequence ID" value="NC_006369.1"/>
</dbReference>
<dbReference type="SMR" id="Q5WTG3"/>
<dbReference type="GeneID" id="57036635"/>
<dbReference type="KEGG" id="lpf:lpl2561"/>
<dbReference type="LegioList" id="lpl2561"/>
<dbReference type="HOGENOM" id="CLU_160655_4_0_6"/>
<dbReference type="Proteomes" id="UP000002517">
    <property type="component" value="Chromosome"/>
</dbReference>
<dbReference type="GO" id="GO:0005829">
    <property type="term" value="C:cytosol"/>
    <property type="evidence" value="ECO:0007669"/>
    <property type="project" value="TreeGrafter"/>
</dbReference>
<dbReference type="GO" id="GO:0015935">
    <property type="term" value="C:small ribosomal subunit"/>
    <property type="evidence" value="ECO:0007669"/>
    <property type="project" value="TreeGrafter"/>
</dbReference>
<dbReference type="GO" id="GO:0070181">
    <property type="term" value="F:small ribosomal subunit rRNA binding"/>
    <property type="evidence" value="ECO:0007669"/>
    <property type="project" value="TreeGrafter"/>
</dbReference>
<dbReference type="GO" id="GO:0003735">
    <property type="term" value="F:structural constituent of ribosome"/>
    <property type="evidence" value="ECO:0007669"/>
    <property type="project" value="InterPro"/>
</dbReference>
<dbReference type="GO" id="GO:0006412">
    <property type="term" value="P:translation"/>
    <property type="evidence" value="ECO:0007669"/>
    <property type="project" value="UniProtKB-UniRule"/>
</dbReference>
<dbReference type="FunFam" id="1.20.58.110:FF:000001">
    <property type="entry name" value="30S ribosomal protein S20"/>
    <property type="match status" value="1"/>
</dbReference>
<dbReference type="Gene3D" id="1.20.58.110">
    <property type="entry name" value="Ribosomal protein S20"/>
    <property type="match status" value="1"/>
</dbReference>
<dbReference type="HAMAP" id="MF_00500">
    <property type="entry name" value="Ribosomal_bS20"/>
    <property type="match status" value="1"/>
</dbReference>
<dbReference type="InterPro" id="IPR002583">
    <property type="entry name" value="Ribosomal_bS20"/>
</dbReference>
<dbReference type="InterPro" id="IPR036510">
    <property type="entry name" value="Ribosomal_bS20_sf"/>
</dbReference>
<dbReference type="NCBIfam" id="TIGR00029">
    <property type="entry name" value="S20"/>
    <property type="match status" value="1"/>
</dbReference>
<dbReference type="PANTHER" id="PTHR33398">
    <property type="entry name" value="30S RIBOSOMAL PROTEIN S20"/>
    <property type="match status" value="1"/>
</dbReference>
<dbReference type="PANTHER" id="PTHR33398:SF1">
    <property type="entry name" value="SMALL RIBOSOMAL SUBUNIT PROTEIN BS20C"/>
    <property type="match status" value="1"/>
</dbReference>
<dbReference type="Pfam" id="PF01649">
    <property type="entry name" value="Ribosomal_S20p"/>
    <property type="match status" value="1"/>
</dbReference>
<dbReference type="SUPFAM" id="SSF46992">
    <property type="entry name" value="Ribosomal protein S20"/>
    <property type="match status" value="1"/>
</dbReference>
<proteinExistence type="inferred from homology"/>
<name>RS20_LEGPL</name>
<feature type="chain" id="PRO_0000167980" description="Small ribosomal subunit protein bS20">
    <location>
        <begin position="1"/>
        <end position="88"/>
    </location>
</feature>
<keyword id="KW-0687">Ribonucleoprotein</keyword>
<keyword id="KW-0689">Ribosomal protein</keyword>
<keyword id="KW-0694">RNA-binding</keyword>
<keyword id="KW-0699">rRNA-binding</keyword>
<reference key="1">
    <citation type="journal article" date="2004" name="Nat. Genet.">
        <title>Evidence in the Legionella pneumophila genome for exploitation of host cell functions and high genome plasticity.</title>
        <authorList>
            <person name="Cazalet C."/>
            <person name="Rusniok C."/>
            <person name="Brueggemann H."/>
            <person name="Zidane N."/>
            <person name="Magnier A."/>
            <person name="Ma L."/>
            <person name="Tichit M."/>
            <person name="Jarraud S."/>
            <person name="Bouchier C."/>
            <person name="Vandenesch F."/>
            <person name="Kunst F."/>
            <person name="Etienne J."/>
            <person name="Glaser P."/>
            <person name="Buchrieser C."/>
        </authorList>
    </citation>
    <scope>NUCLEOTIDE SEQUENCE [LARGE SCALE GENOMIC DNA]</scope>
    <source>
        <strain>Lens</strain>
    </source>
</reference>
<sequence>MANIKSAIKRARQNVKLRQHNASARSMYRTYIKNVLKAVESGDQEAARAAYTKAQPVIDKAANKGLIHKNKAARIKGRLVARLKAMAA</sequence>
<protein>
    <recommendedName>
        <fullName evidence="1">Small ribosomal subunit protein bS20</fullName>
    </recommendedName>
    <alternativeName>
        <fullName evidence="2">30S ribosomal protein S20</fullName>
    </alternativeName>
</protein>
<gene>
    <name evidence="1" type="primary">rpsT</name>
    <name type="ordered locus">lpl2561</name>
</gene>